<name>COAD_PROMI</name>
<proteinExistence type="inferred from homology"/>
<organism>
    <name type="scientific">Proteus mirabilis</name>
    <dbReference type="NCBI Taxonomy" id="584"/>
    <lineage>
        <taxon>Bacteria</taxon>
        <taxon>Pseudomonadati</taxon>
        <taxon>Pseudomonadota</taxon>
        <taxon>Gammaproteobacteria</taxon>
        <taxon>Enterobacterales</taxon>
        <taxon>Morganellaceae</taxon>
        <taxon>Proteus</taxon>
    </lineage>
</organism>
<keyword id="KW-0067">ATP-binding</keyword>
<keyword id="KW-0173">Coenzyme A biosynthesis</keyword>
<keyword id="KW-0963">Cytoplasm</keyword>
<keyword id="KW-0460">Magnesium</keyword>
<keyword id="KW-0547">Nucleotide-binding</keyword>
<keyword id="KW-0548">Nucleotidyltransferase</keyword>
<keyword id="KW-0808">Transferase</keyword>
<reference key="1">
    <citation type="journal article" date="2002" name="Microbiology">
        <title>The inner-core lipopolysaccharide biosynthetic waaE gene: function and genetic distribution among some Enterobacteriaceae.</title>
        <authorList>
            <person name="Izquierdo L."/>
            <person name="Abitiu N."/>
            <person name="Coderch N."/>
            <person name="Hita B."/>
            <person name="Merino S."/>
            <person name="Gavin R."/>
            <person name="Tomas J.M."/>
            <person name="Regue M."/>
        </authorList>
    </citation>
    <scope>NUCLEOTIDE SEQUENCE [GENOMIC DNA]</scope>
    <source>
        <strain>NCIMB 5887 / CECT 170</strain>
    </source>
</reference>
<gene>
    <name evidence="1" type="primary">coaD</name>
</gene>
<sequence length="161" mass="17915">MKNKAIYPGTFDPITYGHIDILTRAAGMFDTVLLAIAASARKNPMFSLEERVALAKEVTQHLPNVEVVGFCELMANFAKKQQATILIRGVRSVSDFEYEWQLANMNRHFAPDLDSVFLLPSQNLSFVSSSLIKDVARHDGDVSTFLPEVVATAMLQKLGKR</sequence>
<feature type="chain" id="PRO_0000156255" description="Phosphopantetheine adenylyltransferase">
    <location>
        <begin position="1"/>
        <end position="161"/>
    </location>
</feature>
<feature type="binding site" evidence="1">
    <location>
        <begin position="10"/>
        <end position="11"/>
    </location>
    <ligand>
        <name>ATP</name>
        <dbReference type="ChEBI" id="CHEBI:30616"/>
    </ligand>
</feature>
<feature type="binding site" evidence="1">
    <location>
        <position position="10"/>
    </location>
    <ligand>
        <name>substrate</name>
    </ligand>
</feature>
<feature type="binding site" evidence="1">
    <location>
        <position position="18"/>
    </location>
    <ligand>
        <name>ATP</name>
        <dbReference type="ChEBI" id="CHEBI:30616"/>
    </ligand>
</feature>
<feature type="binding site" evidence="1">
    <location>
        <position position="42"/>
    </location>
    <ligand>
        <name>substrate</name>
    </ligand>
</feature>
<feature type="binding site" evidence="1">
    <location>
        <position position="74"/>
    </location>
    <ligand>
        <name>substrate</name>
    </ligand>
</feature>
<feature type="binding site" evidence="1">
    <location>
        <position position="88"/>
    </location>
    <ligand>
        <name>substrate</name>
    </ligand>
</feature>
<feature type="binding site" evidence="1">
    <location>
        <begin position="89"/>
        <end position="91"/>
    </location>
    <ligand>
        <name>ATP</name>
        <dbReference type="ChEBI" id="CHEBI:30616"/>
    </ligand>
</feature>
<feature type="binding site" evidence="1">
    <location>
        <position position="99"/>
    </location>
    <ligand>
        <name>ATP</name>
        <dbReference type="ChEBI" id="CHEBI:30616"/>
    </ligand>
</feature>
<feature type="binding site" evidence="1">
    <location>
        <begin position="124"/>
        <end position="130"/>
    </location>
    <ligand>
        <name>ATP</name>
        <dbReference type="ChEBI" id="CHEBI:30616"/>
    </ligand>
</feature>
<feature type="site" description="Transition state stabilizer" evidence="1">
    <location>
        <position position="18"/>
    </location>
</feature>
<evidence type="ECO:0000255" key="1">
    <source>
        <dbReference type="HAMAP-Rule" id="MF_00151"/>
    </source>
</evidence>
<protein>
    <recommendedName>
        <fullName evidence="1">Phosphopantetheine adenylyltransferase</fullName>
        <ecNumber evidence="1">2.7.7.3</ecNumber>
    </recommendedName>
    <alternativeName>
        <fullName evidence="1">Dephospho-CoA pyrophosphorylase</fullName>
    </alternativeName>
    <alternativeName>
        <fullName evidence="1">Pantetheine-phosphate adenylyltransferase</fullName>
        <shortName evidence="1">PPAT</shortName>
    </alternativeName>
</protein>
<accession>Q8RSX4</accession>
<dbReference type="EC" id="2.7.7.3" evidence="1"/>
<dbReference type="EMBL" id="AY075039">
    <property type="protein sequence ID" value="AAL78072.1"/>
    <property type="molecule type" value="Genomic_DNA"/>
</dbReference>
<dbReference type="RefSeq" id="WP_004246474.1">
    <property type="nucleotide sequence ID" value="NZ_WURR01000008.1"/>
</dbReference>
<dbReference type="SMR" id="Q8RSX4"/>
<dbReference type="STRING" id="584.AOUC001_18825"/>
<dbReference type="GeneID" id="6802670"/>
<dbReference type="OMA" id="MALMNRK"/>
<dbReference type="UniPathway" id="UPA00241">
    <property type="reaction ID" value="UER00355"/>
</dbReference>
<dbReference type="GO" id="GO:0005737">
    <property type="term" value="C:cytoplasm"/>
    <property type="evidence" value="ECO:0007669"/>
    <property type="project" value="UniProtKB-SubCell"/>
</dbReference>
<dbReference type="GO" id="GO:0005524">
    <property type="term" value="F:ATP binding"/>
    <property type="evidence" value="ECO:0007669"/>
    <property type="project" value="UniProtKB-KW"/>
</dbReference>
<dbReference type="GO" id="GO:0004595">
    <property type="term" value="F:pantetheine-phosphate adenylyltransferase activity"/>
    <property type="evidence" value="ECO:0007669"/>
    <property type="project" value="UniProtKB-UniRule"/>
</dbReference>
<dbReference type="GO" id="GO:0015937">
    <property type="term" value="P:coenzyme A biosynthetic process"/>
    <property type="evidence" value="ECO:0007669"/>
    <property type="project" value="UniProtKB-UniRule"/>
</dbReference>
<dbReference type="CDD" id="cd02163">
    <property type="entry name" value="PPAT"/>
    <property type="match status" value="1"/>
</dbReference>
<dbReference type="FunFam" id="3.40.50.620:FF:000012">
    <property type="entry name" value="Phosphopantetheine adenylyltransferase"/>
    <property type="match status" value="1"/>
</dbReference>
<dbReference type="Gene3D" id="3.40.50.620">
    <property type="entry name" value="HUPs"/>
    <property type="match status" value="1"/>
</dbReference>
<dbReference type="HAMAP" id="MF_00151">
    <property type="entry name" value="PPAT_bact"/>
    <property type="match status" value="1"/>
</dbReference>
<dbReference type="InterPro" id="IPR004821">
    <property type="entry name" value="Cyt_trans-like"/>
</dbReference>
<dbReference type="InterPro" id="IPR001980">
    <property type="entry name" value="PPAT"/>
</dbReference>
<dbReference type="InterPro" id="IPR014729">
    <property type="entry name" value="Rossmann-like_a/b/a_fold"/>
</dbReference>
<dbReference type="NCBIfam" id="TIGR01510">
    <property type="entry name" value="coaD_prev_kdtB"/>
    <property type="match status" value="1"/>
</dbReference>
<dbReference type="NCBIfam" id="TIGR00125">
    <property type="entry name" value="cyt_tran_rel"/>
    <property type="match status" value="1"/>
</dbReference>
<dbReference type="PANTHER" id="PTHR21342">
    <property type="entry name" value="PHOSPHOPANTETHEINE ADENYLYLTRANSFERASE"/>
    <property type="match status" value="1"/>
</dbReference>
<dbReference type="PANTHER" id="PTHR21342:SF1">
    <property type="entry name" value="PHOSPHOPANTETHEINE ADENYLYLTRANSFERASE"/>
    <property type="match status" value="1"/>
</dbReference>
<dbReference type="Pfam" id="PF01467">
    <property type="entry name" value="CTP_transf_like"/>
    <property type="match status" value="1"/>
</dbReference>
<dbReference type="PRINTS" id="PR01020">
    <property type="entry name" value="LPSBIOSNTHSS"/>
</dbReference>
<dbReference type="SUPFAM" id="SSF52374">
    <property type="entry name" value="Nucleotidylyl transferase"/>
    <property type="match status" value="1"/>
</dbReference>
<comment type="function">
    <text evidence="1">Reversibly transfers an adenylyl group from ATP to 4'-phosphopantetheine, yielding dephospho-CoA (dPCoA) and pyrophosphate.</text>
</comment>
<comment type="catalytic activity">
    <reaction evidence="1">
        <text>(R)-4'-phosphopantetheine + ATP + H(+) = 3'-dephospho-CoA + diphosphate</text>
        <dbReference type="Rhea" id="RHEA:19801"/>
        <dbReference type="ChEBI" id="CHEBI:15378"/>
        <dbReference type="ChEBI" id="CHEBI:30616"/>
        <dbReference type="ChEBI" id="CHEBI:33019"/>
        <dbReference type="ChEBI" id="CHEBI:57328"/>
        <dbReference type="ChEBI" id="CHEBI:61723"/>
        <dbReference type="EC" id="2.7.7.3"/>
    </reaction>
</comment>
<comment type="cofactor">
    <cofactor evidence="1">
        <name>Mg(2+)</name>
        <dbReference type="ChEBI" id="CHEBI:18420"/>
    </cofactor>
</comment>
<comment type="pathway">
    <text evidence="1">Cofactor biosynthesis; coenzyme A biosynthesis; CoA from (R)-pantothenate: step 4/5.</text>
</comment>
<comment type="subunit">
    <text evidence="1">Homohexamer.</text>
</comment>
<comment type="subcellular location">
    <subcellularLocation>
        <location evidence="1">Cytoplasm</location>
    </subcellularLocation>
</comment>
<comment type="similarity">
    <text evidence="1">Belongs to the bacterial CoaD family.</text>
</comment>